<accession>B7MB70</accession>
<protein>
    <recommendedName>
        <fullName evidence="1">DnaA initiator-associating protein DiaA</fullName>
    </recommendedName>
</protein>
<reference key="1">
    <citation type="journal article" date="2009" name="PLoS Genet.">
        <title>Organised genome dynamics in the Escherichia coli species results in highly diverse adaptive paths.</title>
        <authorList>
            <person name="Touchon M."/>
            <person name="Hoede C."/>
            <person name="Tenaillon O."/>
            <person name="Barbe V."/>
            <person name="Baeriswyl S."/>
            <person name="Bidet P."/>
            <person name="Bingen E."/>
            <person name="Bonacorsi S."/>
            <person name="Bouchier C."/>
            <person name="Bouvet O."/>
            <person name="Calteau A."/>
            <person name="Chiapello H."/>
            <person name="Clermont O."/>
            <person name="Cruveiller S."/>
            <person name="Danchin A."/>
            <person name="Diard M."/>
            <person name="Dossat C."/>
            <person name="Karoui M.E."/>
            <person name="Frapy E."/>
            <person name="Garry L."/>
            <person name="Ghigo J.M."/>
            <person name="Gilles A.M."/>
            <person name="Johnson J."/>
            <person name="Le Bouguenec C."/>
            <person name="Lescat M."/>
            <person name="Mangenot S."/>
            <person name="Martinez-Jehanne V."/>
            <person name="Matic I."/>
            <person name="Nassif X."/>
            <person name="Oztas S."/>
            <person name="Petit M.A."/>
            <person name="Pichon C."/>
            <person name="Rouy Z."/>
            <person name="Ruf C.S."/>
            <person name="Schneider D."/>
            <person name="Tourret J."/>
            <person name="Vacherie B."/>
            <person name="Vallenet D."/>
            <person name="Medigue C."/>
            <person name="Rocha E.P.C."/>
            <person name="Denamur E."/>
        </authorList>
    </citation>
    <scope>NUCLEOTIDE SEQUENCE [LARGE SCALE GENOMIC DNA]</scope>
    <source>
        <strain>S88 / ExPEC</strain>
    </source>
</reference>
<evidence type="ECO:0000255" key="1">
    <source>
        <dbReference type="HAMAP-Rule" id="MF_01157"/>
    </source>
</evidence>
<organism>
    <name type="scientific">Escherichia coli O45:K1 (strain S88 / ExPEC)</name>
    <dbReference type="NCBI Taxonomy" id="585035"/>
    <lineage>
        <taxon>Bacteria</taxon>
        <taxon>Pseudomonadati</taxon>
        <taxon>Pseudomonadota</taxon>
        <taxon>Gammaproteobacteria</taxon>
        <taxon>Enterobacterales</taxon>
        <taxon>Enterobacteriaceae</taxon>
        <taxon>Escherichia</taxon>
    </lineage>
</organism>
<proteinExistence type="inferred from homology"/>
<keyword id="KW-0235">DNA replication</keyword>
<keyword id="KW-1185">Reference proteome</keyword>
<name>DIAA_ECO45</name>
<feature type="chain" id="PRO_1000137784" description="DnaA initiator-associating protein DiaA">
    <location>
        <begin position="1"/>
        <end position="196"/>
    </location>
</feature>
<feature type="domain" description="SIS" evidence="1">
    <location>
        <begin position="34"/>
        <end position="196"/>
    </location>
</feature>
<comment type="function">
    <text evidence="1">Required for the timely initiation of chromosomal replication via direct interactions with the DnaA initiator protein.</text>
</comment>
<comment type="subunit">
    <text evidence="1">Homotetramer; dimer of dimers.</text>
</comment>
<comment type="similarity">
    <text evidence="1">Belongs to the SIS family. DiaA subfamily.</text>
</comment>
<gene>
    <name evidence="1" type="primary">diaA</name>
    <name type="ordered locus">ECS88_3533</name>
</gene>
<dbReference type="EMBL" id="CU928161">
    <property type="protein sequence ID" value="CAR04761.1"/>
    <property type="molecule type" value="Genomic_DNA"/>
</dbReference>
<dbReference type="RefSeq" id="WP_001158035.1">
    <property type="nucleotide sequence ID" value="NC_011742.1"/>
</dbReference>
<dbReference type="SMR" id="B7MB70"/>
<dbReference type="GeneID" id="75206004"/>
<dbReference type="KEGG" id="ecz:ECS88_3533"/>
<dbReference type="HOGENOM" id="CLU_080999_3_1_6"/>
<dbReference type="Proteomes" id="UP000000747">
    <property type="component" value="Chromosome"/>
</dbReference>
<dbReference type="GO" id="GO:0097367">
    <property type="term" value="F:carbohydrate derivative binding"/>
    <property type="evidence" value="ECO:0007669"/>
    <property type="project" value="InterPro"/>
</dbReference>
<dbReference type="GO" id="GO:1901135">
    <property type="term" value="P:carbohydrate derivative metabolic process"/>
    <property type="evidence" value="ECO:0007669"/>
    <property type="project" value="InterPro"/>
</dbReference>
<dbReference type="GO" id="GO:0006260">
    <property type="term" value="P:DNA replication"/>
    <property type="evidence" value="ECO:0007669"/>
    <property type="project" value="UniProtKB-UniRule"/>
</dbReference>
<dbReference type="CDD" id="cd05006">
    <property type="entry name" value="SIS_GmhA"/>
    <property type="match status" value="1"/>
</dbReference>
<dbReference type="FunFam" id="3.40.50.10490:FF:000006">
    <property type="entry name" value="DnaA initiator-associating protein DiaA"/>
    <property type="match status" value="1"/>
</dbReference>
<dbReference type="Gene3D" id="3.40.50.10490">
    <property type="entry name" value="Glucose-6-phosphate isomerase like protein, domain 1"/>
    <property type="match status" value="1"/>
</dbReference>
<dbReference type="HAMAP" id="MF_01157">
    <property type="entry name" value="SIS_DiaA"/>
    <property type="match status" value="1"/>
</dbReference>
<dbReference type="InterPro" id="IPR023070">
    <property type="entry name" value="DiaA"/>
</dbReference>
<dbReference type="InterPro" id="IPR035461">
    <property type="entry name" value="GmhA/DiaA"/>
</dbReference>
<dbReference type="InterPro" id="IPR001347">
    <property type="entry name" value="SIS_dom"/>
</dbReference>
<dbReference type="InterPro" id="IPR046348">
    <property type="entry name" value="SIS_dom_sf"/>
</dbReference>
<dbReference type="InterPro" id="IPR050099">
    <property type="entry name" value="SIS_GmhA/DiaA_subfam"/>
</dbReference>
<dbReference type="NCBIfam" id="NF008138">
    <property type="entry name" value="PRK10886.1"/>
    <property type="match status" value="1"/>
</dbReference>
<dbReference type="NCBIfam" id="NF010546">
    <property type="entry name" value="PRK13936.1"/>
    <property type="match status" value="1"/>
</dbReference>
<dbReference type="PANTHER" id="PTHR30390:SF6">
    <property type="entry name" value="DNAA INITIATOR-ASSOCIATING PROTEIN DIAA"/>
    <property type="match status" value="1"/>
</dbReference>
<dbReference type="PANTHER" id="PTHR30390">
    <property type="entry name" value="SEDOHEPTULOSE 7-PHOSPHATE ISOMERASE / DNAA INITIATOR-ASSOCIATING FACTOR FOR REPLICATION INITIATION"/>
    <property type="match status" value="1"/>
</dbReference>
<dbReference type="Pfam" id="PF13580">
    <property type="entry name" value="SIS_2"/>
    <property type="match status" value="1"/>
</dbReference>
<dbReference type="SUPFAM" id="SSF53697">
    <property type="entry name" value="SIS domain"/>
    <property type="match status" value="1"/>
</dbReference>
<dbReference type="PROSITE" id="PS51464">
    <property type="entry name" value="SIS"/>
    <property type="match status" value="1"/>
</dbReference>
<sequence>MQERIKACFTESIQTQIAAAEALPDAISRAAMTLVQSLLNGNKILCCGNGTSAANAQHFAASMINRFETERPSLPAIALNTDNVVLTAIANDRLHDEVYAKQVRALGHAGDVLLAISTRGNSRDIVKAVEAAVTRDMTIVALTGYDGGELAGLLGPQDVEIRIPSHRSARIQEMHMLTVNCLCDLIDNTLFPHQDV</sequence>